<gene>
    <name type="ordered locus">YLL054C</name>
    <name type="ORF">L0584</name>
</gene>
<comment type="function">
    <text evidence="2">Required for growth on non-fermentable carbon sources.</text>
</comment>
<comment type="subcellular location">
    <subcellularLocation>
        <location evidence="4">Nucleus</location>
    </subcellularLocation>
</comment>
<comment type="miscellaneous">
    <text evidence="3">Present with 339 molecules/cell in log phase SD medium.</text>
</comment>
<comment type="sequence caution" evidence="4">
    <conflict type="frameshift">
        <sequence resource="EMBL-CDS" id="AAT92638"/>
    </conflict>
</comment>
<comment type="sequence caution" evidence="4">
    <conflict type="frameshift">
        <sequence resource="EMBL-CDS" id="CAA88003"/>
    </conflict>
</comment>
<comment type="sequence caution" evidence="4">
    <conflict type="frameshift">
        <sequence resource="EMBL-CDS" id="CAA97507"/>
    </conflict>
</comment>
<feature type="chain" id="PRO_0000247135" description="Uncharacterized transcriptional regulatory protein YLL054C">
    <location>
        <begin position="1"/>
        <end position="843"/>
    </location>
</feature>
<feature type="DNA-binding region" description="Zn(2)-C6 fungal-type" evidence="1">
    <location>
        <begin position="15"/>
        <end position="42"/>
    </location>
</feature>
<keyword id="KW-0238">DNA-binding</keyword>
<keyword id="KW-0479">Metal-binding</keyword>
<keyword id="KW-0539">Nucleus</keyword>
<keyword id="KW-1185">Reference proteome</keyword>
<keyword id="KW-0804">Transcription</keyword>
<keyword id="KW-0805">Transcription regulation</keyword>
<keyword id="KW-0862">Zinc</keyword>
<name>YL054_YEAST</name>
<protein>
    <recommendedName>
        <fullName>Uncharacterized transcriptional regulatory protein YLL054C</fullName>
    </recommendedName>
</protein>
<proteinExistence type="evidence at protein level"/>
<dbReference type="EMBL" id="Z47973">
    <property type="protein sequence ID" value="CAA88003.1"/>
    <property type="status" value="ALT_FRAME"/>
    <property type="molecule type" value="Genomic_DNA"/>
</dbReference>
<dbReference type="EMBL" id="Z73159">
    <property type="protein sequence ID" value="CAA97507.1"/>
    <property type="status" value="ALT_FRAME"/>
    <property type="molecule type" value="Genomic_DNA"/>
</dbReference>
<dbReference type="EMBL" id="AY692619">
    <property type="protein sequence ID" value="AAT92638.1"/>
    <property type="status" value="ALT_FRAME"/>
    <property type="molecule type" value="Genomic_DNA"/>
</dbReference>
<dbReference type="EMBL" id="BK006945">
    <property type="protein sequence ID" value="DAA09270.2"/>
    <property type="molecule type" value="Genomic_DNA"/>
</dbReference>
<dbReference type="PIR" id="S50966">
    <property type="entry name" value="S50966"/>
</dbReference>
<dbReference type="RefSeq" id="NP_013046.2">
    <property type="nucleotide sequence ID" value="NM_001181874.2"/>
</dbReference>
<dbReference type="SMR" id="Q12244"/>
<dbReference type="BioGRID" id="31261">
    <property type="interactions" value="53"/>
</dbReference>
<dbReference type="DIP" id="DIP-5612N"/>
<dbReference type="FunCoup" id="Q12244">
    <property type="interactions" value="75"/>
</dbReference>
<dbReference type="IntAct" id="Q12244">
    <property type="interactions" value="5"/>
</dbReference>
<dbReference type="STRING" id="4932.YLL054C"/>
<dbReference type="iPTMnet" id="Q12244"/>
<dbReference type="PaxDb" id="4932-YLL054C"/>
<dbReference type="PeptideAtlas" id="Q12244"/>
<dbReference type="EnsemblFungi" id="YLL054C_mRNA">
    <property type="protein sequence ID" value="YLL054C"/>
    <property type="gene ID" value="YLL054C"/>
</dbReference>
<dbReference type="GeneID" id="850672"/>
<dbReference type="KEGG" id="sce:YLL054C"/>
<dbReference type="AGR" id="SGD:S000003977"/>
<dbReference type="SGD" id="S000003977">
    <property type="gene designation" value="YLL054C"/>
</dbReference>
<dbReference type="VEuPathDB" id="FungiDB:YLL054C"/>
<dbReference type="eggNOG" id="ENOG502RJ72">
    <property type="taxonomic scope" value="Eukaryota"/>
</dbReference>
<dbReference type="GeneTree" id="ENSGT00940000176335"/>
<dbReference type="HOGENOM" id="CLU_015392_0_0_1"/>
<dbReference type="InParanoid" id="Q12244"/>
<dbReference type="OrthoDB" id="2943660at2759"/>
<dbReference type="BioCyc" id="YEAST:G3O-32153-MONOMER"/>
<dbReference type="BioGRID-ORCS" id="850672">
    <property type="hits" value="0 hits in 13 CRISPR screens"/>
</dbReference>
<dbReference type="PRO" id="PR:Q12244"/>
<dbReference type="Proteomes" id="UP000002311">
    <property type="component" value="Chromosome XII"/>
</dbReference>
<dbReference type="RNAct" id="Q12244">
    <property type="molecule type" value="protein"/>
</dbReference>
<dbReference type="GO" id="GO:0005634">
    <property type="term" value="C:nucleus"/>
    <property type="evidence" value="ECO:0000318"/>
    <property type="project" value="GO_Central"/>
</dbReference>
<dbReference type="GO" id="GO:0000981">
    <property type="term" value="F:DNA-binding transcription factor activity, RNA polymerase II-specific"/>
    <property type="evidence" value="ECO:0000247"/>
    <property type="project" value="SGD"/>
</dbReference>
<dbReference type="GO" id="GO:0043565">
    <property type="term" value="F:sequence-specific DNA binding"/>
    <property type="evidence" value="ECO:0007005"/>
    <property type="project" value="SGD"/>
</dbReference>
<dbReference type="GO" id="GO:0008270">
    <property type="term" value="F:zinc ion binding"/>
    <property type="evidence" value="ECO:0007669"/>
    <property type="project" value="InterPro"/>
</dbReference>
<dbReference type="GO" id="GO:0045944">
    <property type="term" value="P:positive regulation of transcription by RNA polymerase II"/>
    <property type="evidence" value="ECO:0000318"/>
    <property type="project" value="GO_Central"/>
</dbReference>
<dbReference type="CDD" id="cd12148">
    <property type="entry name" value="fungal_TF_MHR"/>
    <property type="match status" value="1"/>
</dbReference>
<dbReference type="CDD" id="cd00067">
    <property type="entry name" value="GAL4"/>
    <property type="match status" value="1"/>
</dbReference>
<dbReference type="Gene3D" id="4.10.240.10">
    <property type="entry name" value="Zn(2)-C6 fungal-type DNA-binding domain"/>
    <property type="match status" value="1"/>
</dbReference>
<dbReference type="InterPro" id="IPR050675">
    <property type="entry name" value="OAF3"/>
</dbReference>
<dbReference type="InterPro" id="IPR036864">
    <property type="entry name" value="Zn2-C6_fun-type_DNA-bd_sf"/>
</dbReference>
<dbReference type="InterPro" id="IPR001138">
    <property type="entry name" value="Zn2Cys6_DnaBD"/>
</dbReference>
<dbReference type="PANTHER" id="PTHR31069">
    <property type="entry name" value="OLEATE-ACTIVATED TRANSCRIPTION FACTOR 1-RELATED"/>
    <property type="match status" value="1"/>
</dbReference>
<dbReference type="PANTHER" id="PTHR31069:SF29">
    <property type="entry name" value="OLEATE-ACTIVATED TRANSCRIPTION FACTOR 1-RELATED"/>
    <property type="match status" value="1"/>
</dbReference>
<dbReference type="Pfam" id="PF00172">
    <property type="entry name" value="Zn_clus"/>
    <property type="match status" value="1"/>
</dbReference>
<dbReference type="SMART" id="SM00066">
    <property type="entry name" value="GAL4"/>
    <property type="match status" value="1"/>
</dbReference>
<dbReference type="SUPFAM" id="SSF57701">
    <property type="entry name" value="Zn2/Cys6 DNA-binding domain"/>
    <property type="match status" value="1"/>
</dbReference>
<dbReference type="PROSITE" id="PS00463">
    <property type="entry name" value="ZN2_CY6_FUNGAL_1"/>
    <property type="match status" value="1"/>
</dbReference>
<dbReference type="PROSITE" id="PS50048">
    <property type="entry name" value="ZN2_CY6_FUNGAL_2"/>
    <property type="match status" value="1"/>
</dbReference>
<sequence length="843" mass="97610">MSIASQKKVKPSFVCLRCKQRKIKCDKLWPTCSKCKASSSICSYEVEPGRINKSPTIENAPHRDIRNITPASMSASGSFTSILNPSTKDWEMKNFAMNLSNAHDKLVVMNNTTIVDSPFAFHSILQHDLYAKALTTCIHERILIDVERHRENVSANNKKRELNLTIGDIGPLFFIDKAALKFIENTSKTSKLYPPIDFLYNTYDYEQAHPEENNDKISINILLEELSKYFLNKNEVDGLIVDFYKTIYPVYPLLEISLFEDNIRELLQLNEFNGYNIVFAGKDSRRKLETITLLTIILAFSYRRLSLSTSHSFKESFGVKSNNLTLLAHKLLALMNVFQYVNEHTLCCLLYFFILRYLNPDQADMYPTHSDILNLKFLENVAIKLGLNEEPFQYTRYVSESDDYPRLFNLRRKLWLGVQFLKFGILIPEGDSDILSLEYLRSFMKTDESLPELFERNYASTNNLDLSLMATAENIYHLHLSLQVLLTSCFPINGPSYLKEVLDNIDKTKDFLNQKFPLILSSLGEPRMKSLHINVPSSLANEESFDFSTFEENETFIANVISYTCTMNIYDSLSLHFENQCFKNALEYKTYYHRFTFTAIQDYLTLLKLISEYFNGSLLHLREPFGFATQKVVRFSIHRLLIFQATLLVRLFYKKDTCDRSSAAMGMLNDRNGRLSRVIEKMIKLMSYHMKLLVEIVISKLEKSYLGSFISVSIFRYIIYLVDTDALSAFISDYWKSDAVMDERYSRIHRIVGLKWGMGRDKSFSFTSKLNNPQFLGSLDLEILEELEKLISAQEFSRNFTEDVDESLQSEIDLMNYDNEALNQLMAIDLDKLLGIFPNLSNF</sequence>
<reference key="1">
    <citation type="journal article" date="1997" name="Nature">
        <title>The nucleotide sequence of Saccharomyces cerevisiae chromosome XII.</title>
        <authorList>
            <person name="Johnston M."/>
            <person name="Hillier L.W."/>
            <person name="Riles L."/>
            <person name="Albermann K."/>
            <person name="Andre B."/>
            <person name="Ansorge W."/>
            <person name="Benes V."/>
            <person name="Brueckner M."/>
            <person name="Delius H."/>
            <person name="Dubois E."/>
            <person name="Duesterhoeft A."/>
            <person name="Entian K.-D."/>
            <person name="Floeth M."/>
            <person name="Goffeau A."/>
            <person name="Hebling U."/>
            <person name="Heumann K."/>
            <person name="Heuss-Neitzel D."/>
            <person name="Hilbert H."/>
            <person name="Hilger F."/>
            <person name="Kleine K."/>
            <person name="Koetter P."/>
            <person name="Louis E.J."/>
            <person name="Messenguy F."/>
            <person name="Mewes H.-W."/>
            <person name="Miosga T."/>
            <person name="Moestl D."/>
            <person name="Mueller-Auer S."/>
            <person name="Nentwich U."/>
            <person name="Obermaier B."/>
            <person name="Piravandi E."/>
            <person name="Pohl T.M."/>
            <person name="Portetelle D."/>
            <person name="Purnelle B."/>
            <person name="Rechmann S."/>
            <person name="Rieger M."/>
            <person name="Rinke M."/>
            <person name="Rose M."/>
            <person name="Scharfe M."/>
            <person name="Scherens B."/>
            <person name="Scholler P."/>
            <person name="Schwager C."/>
            <person name="Schwarz S."/>
            <person name="Underwood A.P."/>
            <person name="Urrestarazu L.A."/>
            <person name="Vandenbol M."/>
            <person name="Verhasselt P."/>
            <person name="Vierendeels F."/>
            <person name="Voet M."/>
            <person name="Volckaert G."/>
            <person name="Voss H."/>
            <person name="Wambutt R."/>
            <person name="Wedler E."/>
            <person name="Wedler H."/>
            <person name="Zimmermann F.K."/>
            <person name="Zollner A."/>
            <person name="Hani J."/>
            <person name="Hoheisel J.D."/>
        </authorList>
    </citation>
    <scope>NUCLEOTIDE SEQUENCE [LARGE SCALE GENOMIC DNA]</scope>
    <source>
        <strain>ATCC 204508 / S288c</strain>
    </source>
</reference>
<reference key="2">
    <citation type="journal article" date="2014" name="G3 (Bethesda)">
        <title>The reference genome sequence of Saccharomyces cerevisiae: Then and now.</title>
        <authorList>
            <person name="Engel S.R."/>
            <person name="Dietrich F.S."/>
            <person name="Fisk D.G."/>
            <person name="Binkley G."/>
            <person name="Balakrishnan R."/>
            <person name="Costanzo M.C."/>
            <person name="Dwight S.S."/>
            <person name="Hitz B.C."/>
            <person name="Karra K."/>
            <person name="Nash R.S."/>
            <person name="Weng S."/>
            <person name="Wong E.D."/>
            <person name="Lloyd P."/>
            <person name="Skrzypek M.S."/>
            <person name="Miyasato S.R."/>
            <person name="Simison M."/>
            <person name="Cherry J.M."/>
        </authorList>
    </citation>
    <scope>GENOME REANNOTATION</scope>
    <scope>SEQUENCE REVISION TO 768</scope>
    <source>
        <strain>ATCC 204508 / S288c</strain>
    </source>
</reference>
<reference key="3">
    <citation type="journal article" date="2007" name="Genome Res.">
        <title>Approaching a complete repository of sequence-verified protein-encoding clones for Saccharomyces cerevisiae.</title>
        <authorList>
            <person name="Hu Y."/>
            <person name="Rolfs A."/>
            <person name="Bhullar B."/>
            <person name="Murthy T.V.S."/>
            <person name="Zhu C."/>
            <person name="Berger M.F."/>
            <person name="Camargo A.A."/>
            <person name="Kelley F."/>
            <person name="McCarron S."/>
            <person name="Jepson D."/>
            <person name="Richardson A."/>
            <person name="Raphael J."/>
            <person name="Moreira D."/>
            <person name="Taycher E."/>
            <person name="Zuo D."/>
            <person name="Mohr S."/>
            <person name="Kane M.F."/>
            <person name="Williamson J."/>
            <person name="Simpson A.J.G."/>
            <person name="Bulyk M.L."/>
            <person name="Harlow E."/>
            <person name="Marsischky G."/>
            <person name="Kolodner R.D."/>
            <person name="LaBaer J."/>
        </authorList>
    </citation>
    <scope>NUCLEOTIDE SEQUENCE [GENOMIC DNA]</scope>
    <source>
        <strain>ATCC 204508 / S288c</strain>
    </source>
</reference>
<reference key="4">
    <citation type="journal article" date="2001" name="Nucleic Acids Res.">
        <title>Phenotypic analysis of genes encoding yeast zinc cluster proteins.</title>
        <authorList>
            <person name="Akache B."/>
            <person name="Wu K."/>
            <person name="Turcotte B."/>
        </authorList>
    </citation>
    <scope>FUNCTION</scope>
</reference>
<reference key="5">
    <citation type="journal article" date="2003" name="Nature">
        <title>Global analysis of protein expression in yeast.</title>
        <authorList>
            <person name="Ghaemmaghami S."/>
            <person name="Huh W.-K."/>
            <person name="Bower K."/>
            <person name="Howson R.W."/>
            <person name="Belle A."/>
            <person name="Dephoure N."/>
            <person name="O'Shea E.K."/>
            <person name="Weissman J.S."/>
        </authorList>
    </citation>
    <scope>LEVEL OF PROTEIN EXPRESSION [LARGE SCALE ANALYSIS]</scope>
</reference>
<reference key="6">
    <citation type="journal article" date="2007" name="J. Proteome Res.">
        <title>Large-scale phosphorylation analysis of alpha-factor-arrested Saccharomyces cerevisiae.</title>
        <authorList>
            <person name="Li X."/>
            <person name="Gerber S.A."/>
            <person name="Rudner A.D."/>
            <person name="Beausoleil S.A."/>
            <person name="Haas W."/>
            <person name="Villen J."/>
            <person name="Elias J.E."/>
            <person name="Gygi S.P."/>
        </authorList>
    </citation>
    <scope>IDENTIFICATION BY MASS SPECTROMETRY [LARGE SCALE ANALYSIS]</scope>
    <source>
        <strain>ADR376</strain>
    </source>
</reference>
<reference key="7">
    <citation type="journal article" date="2008" name="Mol. Cell. Proteomics">
        <title>A multidimensional chromatography technology for in-depth phosphoproteome analysis.</title>
        <authorList>
            <person name="Albuquerque C.P."/>
            <person name="Smolka M.B."/>
            <person name="Payne S.H."/>
            <person name="Bafna V."/>
            <person name="Eng J."/>
            <person name="Zhou H."/>
        </authorList>
    </citation>
    <scope>IDENTIFICATION BY MASS SPECTROMETRY [LARGE SCALE ANALYSIS]</scope>
</reference>
<evidence type="ECO:0000255" key="1">
    <source>
        <dbReference type="PROSITE-ProRule" id="PRU00227"/>
    </source>
</evidence>
<evidence type="ECO:0000269" key="2">
    <source>
    </source>
</evidence>
<evidence type="ECO:0000269" key="3">
    <source>
    </source>
</evidence>
<evidence type="ECO:0000305" key="4"/>
<accession>Q12244</accession>
<accession>D6VXV4</accession>
<organism>
    <name type="scientific">Saccharomyces cerevisiae (strain ATCC 204508 / S288c)</name>
    <name type="common">Baker's yeast</name>
    <dbReference type="NCBI Taxonomy" id="559292"/>
    <lineage>
        <taxon>Eukaryota</taxon>
        <taxon>Fungi</taxon>
        <taxon>Dikarya</taxon>
        <taxon>Ascomycota</taxon>
        <taxon>Saccharomycotina</taxon>
        <taxon>Saccharomycetes</taxon>
        <taxon>Saccharomycetales</taxon>
        <taxon>Saccharomycetaceae</taxon>
        <taxon>Saccharomyces</taxon>
    </lineage>
</organism>